<evidence type="ECO:0000255" key="1">
    <source>
        <dbReference type="HAMAP-Rule" id="MF_00049"/>
    </source>
</evidence>
<organism>
    <name type="scientific">Ehrlichia chaffeensis (strain ATCC CRL-10679 / Arkansas)</name>
    <dbReference type="NCBI Taxonomy" id="205920"/>
    <lineage>
        <taxon>Bacteria</taxon>
        <taxon>Pseudomonadati</taxon>
        <taxon>Pseudomonadota</taxon>
        <taxon>Alphaproteobacteria</taxon>
        <taxon>Rickettsiales</taxon>
        <taxon>Anaplasmataceae</taxon>
        <taxon>Ehrlichia</taxon>
    </lineage>
</organism>
<comment type="catalytic activity">
    <reaction evidence="1">
        <text>tRNA(Leu) + L-leucine + ATP = L-leucyl-tRNA(Leu) + AMP + diphosphate</text>
        <dbReference type="Rhea" id="RHEA:11688"/>
        <dbReference type="Rhea" id="RHEA-COMP:9613"/>
        <dbReference type="Rhea" id="RHEA-COMP:9622"/>
        <dbReference type="ChEBI" id="CHEBI:30616"/>
        <dbReference type="ChEBI" id="CHEBI:33019"/>
        <dbReference type="ChEBI" id="CHEBI:57427"/>
        <dbReference type="ChEBI" id="CHEBI:78442"/>
        <dbReference type="ChEBI" id="CHEBI:78494"/>
        <dbReference type="ChEBI" id="CHEBI:456215"/>
        <dbReference type="EC" id="6.1.1.4"/>
    </reaction>
</comment>
<comment type="subcellular location">
    <subcellularLocation>
        <location evidence="1">Cytoplasm</location>
    </subcellularLocation>
</comment>
<comment type="similarity">
    <text evidence="1">Belongs to the class-I aminoacyl-tRNA synthetase family.</text>
</comment>
<sequence>MHYDFKKVEQDIQGKWNFYTDAKQAQCYVLEMFPYPSGNIHMGHLRNYTIGDVIARYKRACGINVFHPIGWDAFGLPAENAALSYNINPHTWTESNIDNMRCQLKSIGLSYDWDKELATCDPSYYKHEQAFFLDFLKCGLAYRKESLVNWDPVDQTVLANEQVIDGRGWRSGAVVEKRKLFQWFLKITDFAEELLNDLQILDQWPEKVKLMQEKWIGKSQGVVIDFEILGINKTLQVFTTCPHTLFGAAFIAVSFDHPILQYVNDSKVIQLINDFDRKNLISDVSSTIEKFGIDSGLVVKHPLLNVNLPVYIVNFVLMDYATGAIFGCPAHDQRDFEFAKKYSLPVKQVVFPEVDVNLDKEAYVGSGIMKHSDFLDGMTVDEAKKAIVAKLTFLGVCKEITYYRMHDWGISRQRYWGCPIPIIYCKKCGTVPVDKKDLPVTLPKDVDFTKYGNPLDNHPTWKYVKCPSCGMDAERETDTFDTFFESSWYFAAFCGTSNGINKDVCNMLLPVNYYVGGVEHAVLHLLYSRFFCRALTKCGYFNIKEPFSNLITQGMVCHSTYSDEQGNYLFPEEAKKMMENGQHVTVGRAEKMSKSKKNVVNLEYIIDKYGADTARLFILSDTPPERDIEWLDDGIEGASRYLSKLWRVIISYDKFNLNFNKENIIGDDVKYRRSVHKILSGITNDLDFCRLNCAVAKFRELSNIISEMIRTSVNCYVVSEAIYILIRVIEPFIPHIAEKLWENIGGKGMLWNQVWPKADSELLVERNVTIVVQVNGKFVKALTVANDIDDDQLKSMALEIAKNRIGGNVVKDIYVIPKRVINIVAVKPS</sequence>
<gene>
    <name evidence="1" type="primary">leuS</name>
    <name type="ordered locus">ECH_0794</name>
</gene>
<proteinExistence type="inferred from homology"/>
<reference key="1">
    <citation type="journal article" date="2006" name="PLoS Genet.">
        <title>Comparative genomics of emerging human ehrlichiosis agents.</title>
        <authorList>
            <person name="Dunning Hotopp J.C."/>
            <person name="Lin M."/>
            <person name="Madupu R."/>
            <person name="Crabtree J."/>
            <person name="Angiuoli S.V."/>
            <person name="Eisen J.A."/>
            <person name="Seshadri R."/>
            <person name="Ren Q."/>
            <person name="Wu M."/>
            <person name="Utterback T.R."/>
            <person name="Smith S."/>
            <person name="Lewis M."/>
            <person name="Khouri H."/>
            <person name="Zhang C."/>
            <person name="Niu H."/>
            <person name="Lin Q."/>
            <person name="Ohashi N."/>
            <person name="Zhi N."/>
            <person name="Nelson W.C."/>
            <person name="Brinkac L.M."/>
            <person name="Dodson R.J."/>
            <person name="Rosovitz M.J."/>
            <person name="Sundaram J.P."/>
            <person name="Daugherty S.C."/>
            <person name="Davidsen T."/>
            <person name="Durkin A.S."/>
            <person name="Gwinn M.L."/>
            <person name="Haft D.H."/>
            <person name="Selengut J.D."/>
            <person name="Sullivan S.A."/>
            <person name="Zafar N."/>
            <person name="Zhou L."/>
            <person name="Benahmed F."/>
            <person name="Forberger H."/>
            <person name="Halpin R."/>
            <person name="Mulligan S."/>
            <person name="Robinson J."/>
            <person name="White O."/>
            <person name="Rikihisa Y."/>
            <person name="Tettelin H."/>
        </authorList>
    </citation>
    <scope>NUCLEOTIDE SEQUENCE [LARGE SCALE GENOMIC DNA]</scope>
    <source>
        <strain>ATCC CRL-10679 / Arkansas</strain>
    </source>
</reference>
<keyword id="KW-0030">Aminoacyl-tRNA synthetase</keyword>
<keyword id="KW-0067">ATP-binding</keyword>
<keyword id="KW-0963">Cytoplasm</keyword>
<keyword id="KW-0436">Ligase</keyword>
<keyword id="KW-0547">Nucleotide-binding</keyword>
<keyword id="KW-0648">Protein biosynthesis</keyword>
<keyword id="KW-1185">Reference proteome</keyword>
<dbReference type="EC" id="6.1.1.4" evidence="1"/>
<dbReference type="EMBL" id="CP000236">
    <property type="protein sequence ID" value="ABD45082.1"/>
    <property type="molecule type" value="Genomic_DNA"/>
</dbReference>
<dbReference type="RefSeq" id="WP_006011277.1">
    <property type="nucleotide sequence ID" value="NC_007799.1"/>
</dbReference>
<dbReference type="SMR" id="Q2GG41"/>
<dbReference type="STRING" id="205920.ECH_0794"/>
<dbReference type="KEGG" id="ech:ECH_0794"/>
<dbReference type="eggNOG" id="COG0495">
    <property type="taxonomic scope" value="Bacteria"/>
</dbReference>
<dbReference type="HOGENOM" id="CLU_004427_0_0_5"/>
<dbReference type="OrthoDB" id="9810365at2"/>
<dbReference type="Proteomes" id="UP000008320">
    <property type="component" value="Chromosome"/>
</dbReference>
<dbReference type="GO" id="GO:0005829">
    <property type="term" value="C:cytosol"/>
    <property type="evidence" value="ECO:0007669"/>
    <property type="project" value="TreeGrafter"/>
</dbReference>
<dbReference type="GO" id="GO:0002161">
    <property type="term" value="F:aminoacyl-tRNA deacylase activity"/>
    <property type="evidence" value="ECO:0007669"/>
    <property type="project" value="InterPro"/>
</dbReference>
<dbReference type="GO" id="GO:0005524">
    <property type="term" value="F:ATP binding"/>
    <property type="evidence" value="ECO:0007669"/>
    <property type="project" value="UniProtKB-UniRule"/>
</dbReference>
<dbReference type="GO" id="GO:0004823">
    <property type="term" value="F:leucine-tRNA ligase activity"/>
    <property type="evidence" value="ECO:0007669"/>
    <property type="project" value="UniProtKB-UniRule"/>
</dbReference>
<dbReference type="GO" id="GO:0006429">
    <property type="term" value="P:leucyl-tRNA aminoacylation"/>
    <property type="evidence" value="ECO:0007669"/>
    <property type="project" value="UniProtKB-UniRule"/>
</dbReference>
<dbReference type="CDD" id="cd07958">
    <property type="entry name" value="Anticodon_Ia_Leu_BEm"/>
    <property type="match status" value="1"/>
</dbReference>
<dbReference type="CDD" id="cd00812">
    <property type="entry name" value="LeuRS_core"/>
    <property type="match status" value="1"/>
</dbReference>
<dbReference type="FunFam" id="1.10.730.10:FF:000002">
    <property type="entry name" value="Leucine--tRNA ligase"/>
    <property type="match status" value="1"/>
</dbReference>
<dbReference type="Gene3D" id="3.40.50.620">
    <property type="entry name" value="HUPs"/>
    <property type="match status" value="2"/>
</dbReference>
<dbReference type="Gene3D" id="1.10.730.10">
    <property type="entry name" value="Isoleucyl-tRNA Synthetase, Domain 1"/>
    <property type="match status" value="2"/>
</dbReference>
<dbReference type="Gene3D" id="3.90.740.10">
    <property type="entry name" value="Valyl/Leucyl/Isoleucyl-tRNA synthetase, editing domain"/>
    <property type="match status" value="1"/>
</dbReference>
<dbReference type="HAMAP" id="MF_00049_B">
    <property type="entry name" value="Leu_tRNA_synth_B"/>
    <property type="match status" value="1"/>
</dbReference>
<dbReference type="InterPro" id="IPR001412">
    <property type="entry name" value="aa-tRNA-synth_I_CS"/>
</dbReference>
<dbReference type="InterPro" id="IPR002300">
    <property type="entry name" value="aa-tRNA-synth_Ia"/>
</dbReference>
<dbReference type="InterPro" id="IPR002302">
    <property type="entry name" value="Leu-tRNA-ligase"/>
</dbReference>
<dbReference type="InterPro" id="IPR025709">
    <property type="entry name" value="Leu_tRNA-synth_edit"/>
</dbReference>
<dbReference type="InterPro" id="IPR013155">
    <property type="entry name" value="M/V/L/I-tRNA-synth_anticd-bd"/>
</dbReference>
<dbReference type="InterPro" id="IPR015413">
    <property type="entry name" value="Methionyl/Leucyl_tRNA_Synth"/>
</dbReference>
<dbReference type="InterPro" id="IPR014729">
    <property type="entry name" value="Rossmann-like_a/b/a_fold"/>
</dbReference>
<dbReference type="InterPro" id="IPR009080">
    <property type="entry name" value="tRNAsynth_Ia_anticodon-bd"/>
</dbReference>
<dbReference type="InterPro" id="IPR009008">
    <property type="entry name" value="Val/Leu/Ile-tRNA-synth_edit"/>
</dbReference>
<dbReference type="NCBIfam" id="TIGR00396">
    <property type="entry name" value="leuS_bact"/>
    <property type="match status" value="1"/>
</dbReference>
<dbReference type="PANTHER" id="PTHR43740:SF2">
    <property type="entry name" value="LEUCINE--TRNA LIGASE, MITOCHONDRIAL"/>
    <property type="match status" value="1"/>
</dbReference>
<dbReference type="PANTHER" id="PTHR43740">
    <property type="entry name" value="LEUCYL-TRNA SYNTHETASE"/>
    <property type="match status" value="1"/>
</dbReference>
<dbReference type="Pfam" id="PF08264">
    <property type="entry name" value="Anticodon_1"/>
    <property type="match status" value="1"/>
</dbReference>
<dbReference type="Pfam" id="PF00133">
    <property type="entry name" value="tRNA-synt_1"/>
    <property type="match status" value="1"/>
</dbReference>
<dbReference type="Pfam" id="PF13603">
    <property type="entry name" value="tRNA-synt_1_2"/>
    <property type="match status" value="1"/>
</dbReference>
<dbReference type="Pfam" id="PF09334">
    <property type="entry name" value="tRNA-synt_1g"/>
    <property type="match status" value="1"/>
</dbReference>
<dbReference type="PRINTS" id="PR00985">
    <property type="entry name" value="TRNASYNTHLEU"/>
</dbReference>
<dbReference type="SUPFAM" id="SSF47323">
    <property type="entry name" value="Anticodon-binding domain of a subclass of class I aminoacyl-tRNA synthetases"/>
    <property type="match status" value="1"/>
</dbReference>
<dbReference type="SUPFAM" id="SSF52374">
    <property type="entry name" value="Nucleotidylyl transferase"/>
    <property type="match status" value="1"/>
</dbReference>
<dbReference type="SUPFAM" id="SSF50677">
    <property type="entry name" value="ValRS/IleRS/LeuRS editing domain"/>
    <property type="match status" value="1"/>
</dbReference>
<dbReference type="PROSITE" id="PS00178">
    <property type="entry name" value="AA_TRNA_LIGASE_I"/>
    <property type="match status" value="1"/>
</dbReference>
<accession>Q2GG41</accession>
<protein>
    <recommendedName>
        <fullName evidence="1">Leucine--tRNA ligase</fullName>
        <ecNumber evidence="1">6.1.1.4</ecNumber>
    </recommendedName>
    <alternativeName>
        <fullName evidence="1">Leucyl-tRNA synthetase</fullName>
        <shortName evidence="1">LeuRS</shortName>
    </alternativeName>
</protein>
<name>SYL_EHRCR</name>
<feature type="chain" id="PRO_0000334753" description="Leucine--tRNA ligase">
    <location>
        <begin position="1"/>
        <end position="829"/>
    </location>
</feature>
<feature type="short sequence motif" description="'HIGH' region">
    <location>
        <begin position="34"/>
        <end position="44"/>
    </location>
</feature>
<feature type="short sequence motif" description="'KMSKS' region">
    <location>
        <begin position="591"/>
        <end position="595"/>
    </location>
</feature>
<feature type="binding site" evidence="1">
    <location>
        <position position="594"/>
    </location>
    <ligand>
        <name>ATP</name>
        <dbReference type="ChEBI" id="CHEBI:30616"/>
    </ligand>
</feature>